<evidence type="ECO:0000255" key="1">
    <source>
        <dbReference type="HAMAP-Rule" id="MF_01106"/>
    </source>
</evidence>
<protein>
    <recommendedName>
        <fullName evidence="1">Arginine biosynthesis bifunctional protein ArgJ</fullName>
    </recommendedName>
    <domain>
        <recommendedName>
            <fullName evidence="1">Glutamate N-acetyltransferase</fullName>
            <ecNumber evidence="1">2.3.1.35</ecNumber>
        </recommendedName>
        <alternativeName>
            <fullName evidence="1">Ornithine acetyltransferase</fullName>
            <shortName evidence="1">OATase</shortName>
        </alternativeName>
        <alternativeName>
            <fullName evidence="1">Ornithine transacetylase</fullName>
        </alternativeName>
    </domain>
    <domain>
        <recommendedName>
            <fullName evidence="1">Amino-acid acetyltransferase</fullName>
            <ecNumber evidence="1">2.3.1.1</ecNumber>
        </recommendedName>
        <alternativeName>
            <fullName evidence="1">N-acetylglutamate synthase</fullName>
            <shortName evidence="1">AGSase</shortName>
        </alternativeName>
    </domain>
    <component>
        <recommendedName>
            <fullName evidence="1">Arginine biosynthesis bifunctional protein ArgJ alpha chain</fullName>
        </recommendedName>
    </component>
    <component>
        <recommendedName>
            <fullName evidence="1">Arginine biosynthesis bifunctional protein ArgJ beta chain</fullName>
        </recommendedName>
    </component>
</protein>
<reference key="1">
    <citation type="journal article" date="2005" name="Nat. Biotechnol.">
        <title>Complete genome sequence of the plant commensal Pseudomonas fluorescens Pf-5.</title>
        <authorList>
            <person name="Paulsen I.T."/>
            <person name="Press C.M."/>
            <person name="Ravel J."/>
            <person name="Kobayashi D.Y."/>
            <person name="Myers G.S.A."/>
            <person name="Mavrodi D.V."/>
            <person name="DeBoy R.T."/>
            <person name="Seshadri R."/>
            <person name="Ren Q."/>
            <person name="Madupu R."/>
            <person name="Dodson R.J."/>
            <person name="Durkin A.S."/>
            <person name="Brinkac L.M."/>
            <person name="Daugherty S.C."/>
            <person name="Sullivan S.A."/>
            <person name="Rosovitz M.J."/>
            <person name="Gwinn M.L."/>
            <person name="Zhou L."/>
            <person name="Schneider D.J."/>
            <person name="Cartinhour S.W."/>
            <person name="Nelson W.C."/>
            <person name="Weidman J."/>
            <person name="Watkins K."/>
            <person name="Tran K."/>
            <person name="Khouri H."/>
            <person name="Pierson E.A."/>
            <person name="Pierson L.S. III"/>
            <person name="Thomashow L.S."/>
            <person name="Loper J.E."/>
        </authorList>
    </citation>
    <scope>NUCLEOTIDE SEQUENCE [LARGE SCALE GENOMIC DNA]</scope>
    <source>
        <strain>ATCC BAA-477 / NRRL B-23932 / Pf-5</strain>
    </source>
</reference>
<organism>
    <name type="scientific">Pseudomonas fluorescens (strain ATCC BAA-477 / NRRL B-23932 / Pf-5)</name>
    <dbReference type="NCBI Taxonomy" id="220664"/>
    <lineage>
        <taxon>Bacteria</taxon>
        <taxon>Pseudomonadati</taxon>
        <taxon>Pseudomonadota</taxon>
        <taxon>Gammaproteobacteria</taxon>
        <taxon>Pseudomonadales</taxon>
        <taxon>Pseudomonadaceae</taxon>
        <taxon>Pseudomonas</taxon>
    </lineage>
</organism>
<feature type="chain" id="PRO_0000227246" description="Arginine biosynthesis bifunctional protein ArgJ alpha chain" evidence="1">
    <location>
        <begin position="1"/>
        <end position="188"/>
    </location>
</feature>
<feature type="chain" id="PRO_0000227247" description="Arginine biosynthesis bifunctional protein ArgJ beta chain" evidence="1">
    <location>
        <begin position="189"/>
        <end position="405"/>
    </location>
</feature>
<feature type="active site" description="Nucleophile" evidence="1">
    <location>
        <position position="189"/>
    </location>
</feature>
<feature type="binding site" evidence="1">
    <location>
        <position position="152"/>
    </location>
    <ligand>
        <name>substrate</name>
    </ligand>
</feature>
<feature type="binding site" evidence="1">
    <location>
        <position position="178"/>
    </location>
    <ligand>
        <name>substrate</name>
    </ligand>
</feature>
<feature type="binding site" evidence="1">
    <location>
        <position position="189"/>
    </location>
    <ligand>
        <name>substrate</name>
    </ligand>
</feature>
<feature type="binding site" evidence="1">
    <location>
        <position position="276"/>
    </location>
    <ligand>
        <name>substrate</name>
    </ligand>
</feature>
<feature type="binding site" evidence="1">
    <location>
        <position position="400"/>
    </location>
    <ligand>
        <name>substrate</name>
    </ligand>
</feature>
<feature type="binding site" evidence="1">
    <location>
        <position position="405"/>
    </location>
    <ligand>
        <name>substrate</name>
    </ligand>
</feature>
<feature type="site" description="Involved in the stabilization of negative charge on the oxyanion by the formation of the oxyanion hole" evidence="1">
    <location>
        <position position="115"/>
    </location>
</feature>
<feature type="site" description="Involved in the stabilization of negative charge on the oxyanion by the formation of the oxyanion hole" evidence="1">
    <location>
        <position position="116"/>
    </location>
</feature>
<feature type="site" description="Cleavage; by autolysis" evidence="1">
    <location>
        <begin position="188"/>
        <end position="189"/>
    </location>
</feature>
<comment type="function">
    <text evidence="1">Catalyzes two activities which are involved in the cyclic version of arginine biosynthesis: the synthesis of N-acetylglutamate from glutamate and acetyl-CoA as the acetyl donor, and of ornithine by transacetylation between N(2)-acetylornithine and glutamate.</text>
</comment>
<comment type="catalytic activity">
    <reaction evidence="1">
        <text>N(2)-acetyl-L-ornithine + L-glutamate = N-acetyl-L-glutamate + L-ornithine</text>
        <dbReference type="Rhea" id="RHEA:15349"/>
        <dbReference type="ChEBI" id="CHEBI:29985"/>
        <dbReference type="ChEBI" id="CHEBI:44337"/>
        <dbReference type="ChEBI" id="CHEBI:46911"/>
        <dbReference type="ChEBI" id="CHEBI:57805"/>
        <dbReference type="EC" id="2.3.1.35"/>
    </reaction>
</comment>
<comment type="catalytic activity">
    <reaction evidence="1">
        <text>L-glutamate + acetyl-CoA = N-acetyl-L-glutamate + CoA + H(+)</text>
        <dbReference type="Rhea" id="RHEA:24292"/>
        <dbReference type="ChEBI" id="CHEBI:15378"/>
        <dbReference type="ChEBI" id="CHEBI:29985"/>
        <dbReference type="ChEBI" id="CHEBI:44337"/>
        <dbReference type="ChEBI" id="CHEBI:57287"/>
        <dbReference type="ChEBI" id="CHEBI:57288"/>
        <dbReference type="EC" id="2.3.1.1"/>
    </reaction>
</comment>
<comment type="pathway">
    <text evidence="1">Amino-acid biosynthesis; L-arginine biosynthesis; L-ornithine and N-acetyl-L-glutamate from L-glutamate and N(2)-acetyl-L-ornithine (cyclic): step 1/1.</text>
</comment>
<comment type="pathway">
    <text evidence="1">Amino-acid biosynthesis; L-arginine biosynthesis; N(2)-acetyl-L-ornithine from L-glutamate: step 1/4.</text>
</comment>
<comment type="subunit">
    <text evidence="1">Heterotetramer of two alpha and two beta chains.</text>
</comment>
<comment type="subcellular location">
    <subcellularLocation>
        <location evidence="1">Cytoplasm</location>
    </subcellularLocation>
</comment>
<comment type="similarity">
    <text evidence="1">Belongs to the ArgJ family.</text>
</comment>
<gene>
    <name evidence="1" type="primary">argJ</name>
    <name type="ordered locus">PFL_4780</name>
</gene>
<proteinExistence type="inferred from homology"/>
<name>ARGJ_PSEF5</name>
<dbReference type="EC" id="2.3.1.35" evidence="1"/>
<dbReference type="EC" id="2.3.1.1" evidence="1"/>
<dbReference type="EMBL" id="CP000076">
    <property type="protein sequence ID" value="AAY94010.1"/>
    <property type="molecule type" value="Genomic_DNA"/>
</dbReference>
<dbReference type="RefSeq" id="WP_011063034.1">
    <property type="nucleotide sequence ID" value="NC_004129.6"/>
</dbReference>
<dbReference type="SMR" id="Q4K7C2"/>
<dbReference type="STRING" id="220664.PFL_4780"/>
<dbReference type="MEROPS" id="T05.001"/>
<dbReference type="KEGG" id="pfl:PFL_4780"/>
<dbReference type="PATRIC" id="fig|220664.5.peg.4891"/>
<dbReference type="eggNOG" id="COG1364">
    <property type="taxonomic scope" value="Bacteria"/>
</dbReference>
<dbReference type="HOGENOM" id="CLU_027172_1_0_6"/>
<dbReference type="UniPathway" id="UPA00068">
    <property type="reaction ID" value="UER00106"/>
</dbReference>
<dbReference type="UniPathway" id="UPA00068">
    <property type="reaction ID" value="UER00111"/>
</dbReference>
<dbReference type="Proteomes" id="UP000008540">
    <property type="component" value="Chromosome"/>
</dbReference>
<dbReference type="GO" id="GO:0005737">
    <property type="term" value="C:cytoplasm"/>
    <property type="evidence" value="ECO:0007669"/>
    <property type="project" value="UniProtKB-SubCell"/>
</dbReference>
<dbReference type="GO" id="GO:0004358">
    <property type="term" value="F:glutamate N-acetyltransferase activity"/>
    <property type="evidence" value="ECO:0007669"/>
    <property type="project" value="UniProtKB-UniRule"/>
</dbReference>
<dbReference type="GO" id="GO:0004042">
    <property type="term" value="F:L-glutamate N-acetyltransferase activity"/>
    <property type="evidence" value="ECO:0007669"/>
    <property type="project" value="UniProtKB-UniRule"/>
</dbReference>
<dbReference type="GO" id="GO:0006526">
    <property type="term" value="P:L-arginine biosynthetic process"/>
    <property type="evidence" value="ECO:0007669"/>
    <property type="project" value="UniProtKB-UniRule"/>
</dbReference>
<dbReference type="GO" id="GO:0006592">
    <property type="term" value="P:ornithine biosynthetic process"/>
    <property type="evidence" value="ECO:0007669"/>
    <property type="project" value="TreeGrafter"/>
</dbReference>
<dbReference type="CDD" id="cd02152">
    <property type="entry name" value="OAT"/>
    <property type="match status" value="1"/>
</dbReference>
<dbReference type="FunFam" id="3.10.20.340:FF:000001">
    <property type="entry name" value="Arginine biosynthesis bifunctional protein ArgJ, chloroplastic"/>
    <property type="match status" value="1"/>
</dbReference>
<dbReference type="FunFam" id="3.60.70.12:FF:000001">
    <property type="entry name" value="Arginine biosynthesis bifunctional protein ArgJ, chloroplastic"/>
    <property type="match status" value="1"/>
</dbReference>
<dbReference type="Gene3D" id="3.10.20.340">
    <property type="entry name" value="ArgJ beta chain, C-terminal domain"/>
    <property type="match status" value="1"/>
</dbReference>
<dbReference type="Gene3D" id="3.60.70.12">
    <property type="entry name" value="L-amino peptidase D-ALA esterase/amidase"/>
    <property type="match status" value="1"/>
</dbReference>
<dbReference type="HAMAP" id="MF_01106">
    <property type="entry name" value="ArgJ"/>
    <property type="match status" value="1"/>
</dbReference>
<dbReference type="InterPro" id="IPR002813">
    <property type="entry name" value="Arg_biosynth_ArgJ"/>
</dbReference>
<dbReference type="InterPro" id="IPR016117">
    <property type="entry name" value="ArgJ-like_dom_sf"/>
</dbReference>
<dbReference type="InterPro" id="IPR042195">
    <property type="entry name" value="ArgJ_beta_C"/>
</dbReference>
<dbReference type="NCBIfam" id="TIGR00120">
    <property type="entry name" value="ArgJ"/>
    <property type="match status" value="1"/>
</dbReference>
<dbReference type="NCBIfam" id="NF003802">
    <property type="entry name" value="PRK05388.1"/>
    <property type="match status" value="1"/>
</dbReference>
<dbReference type="PANTHER" id="PTHR23100">
    <property type="entry name" value="ARGININE BIOSYNTHESIS BIFUNCTIONAL PROTEIN ARGJ"/>
    <property type="match status" value="1"/>
</dbReference>
<dbReference type="PANTHER" id="PTHR23100:SF0">
    <property type="entry name" value="ARGININE BIOSYNTHESIS BIFUNCTIONAL PROTEIN ARGJ, MITOCHONDRIAL"/>
    <property type="match status" value="1"/>
</dbReference>
<dbReference type="Pfam" id="PF01960">
    <property type="entry name" value="ArgJ"/>
    <property type="match status" value="1"/>
</dbReference>
<dbReference type="SUPFAM" id="SSF56266">
    <property type="entry name" value="DmpA/ArgJ-like"/>
    <property type="match status" value="1"/>
</dbReference>
<accession>Q4K7C2</accession>
<keyword id="KW-0012">Acyltransferase</keyword>
<keyword id="KW-0028">Amino-acid biosynthesis</keyword>
<keyword id="KW-0055">Arginine biosynthesis</keyword>
<keyword id="KW-0068">Autocatalytic cleavage</keyword>
<keyword id="KW-0963">Cytoplasm</keyword>
<keyword id="KW-0511">Multifunctional enzyme</keyword>
<keyword id="KW-0808">Transferase</keyword>
<sequence>MAVGLGPLPTLHPVAGFELGIASAGIKRPGRKDVVVMRCAEGSTVAGVFTLNAFCAAPVILAKQRVQGPVRYLLTNTGNANAGTGEPGLAAASRTCAKLAELTGVDASAVLPYSTGVIGEPLPVEKIEGALQAALDDLSVDNWAAAATGIMTTDTLPKGASRQFQHDGVTITVTGISKGAGMIRPNMATMLGYIATDAKVSREVLQNLLLDGANKSFNRITIDGDTSTNDCCMLIATGQAKLPEITKAEGPLFAALKQAVFEVCMEVAQAIVRDGEGATKFVTVEVNGGATYQECLDVGYTVAHSPLIKTALFASDPNWGRILAAVGRAGVPDLDVSKIDVFLGEVCIASRGARAASYTEAQGAAVMQQEEITIRIELGRGACSETIWTTDLSHEYVKINAEYRT</sequence>